<feature type="chain" id="PRO_0000135929" description="Cobalt-precorrin-8 methylmutase">
    <location>
        <begin position="1"/>
        <end position="206"/>
    </location>
</feature>
<feature type="active site" description="Proton donor/acceptor" evidence="1">
    <location>
        <position position="44"/>
    </location>
</feature>
<feature type="binding site" evidence="1">
    <location>
        <position position="16"/>
    </location>
    <ligand>
        <name>substrate</name>
    </ligand>
</feature>
<feature type="binding site" evidence="1">
    <location>
        <position position="41"/>
    </location>
    <ligand>
        <name>substrate</name>
    </ligand>
</feature>
<keyword id="KW-0169">Cobalamin biosynthesis</keyword>
<keyword id="KW-0413">Isomerase</keyword>
<keyword id="KW-1185">Reference proteome</keyword>
<accession>O26329</accession>
<name>CBIC_METTH</name>
<evidence type="ECO:0000250" key="1"/>
<evidence type="ECO:0000305" key="2"/>
<proteinExistence type="inferred from homology"/>
<sequence length="206" mass="21904">MMGASTGQGYEIARKSREIVRELISEDISSLGPAEVAIVERIVHSTADPEYARITEFSQGFVDEALRSLRSSGGILTDIEMVRAGISHPSRCYIREPAVRELAEKRDITRAAASMEYAASQGFRGIVVIGNAPTALMKVIELTLEGLMDARAVIGVPVGFVGAAESKEALRGTEIPHMITRGPKGGTPVAVAAANALIALSKDKEV</sequence>
<comment type="function">
    <text evidence="1">Catalyzes the conversion of cobalt-precorrin-8 to cobyrinate.</text>
</comment>
<comment type="catalytic activity">
    <reaction>
        <text>Co-precorrin-8X = cob(II)yrinate</text>
        <dbReference type="Rhea" id="RHEA:16209"/>
        <dbReference type="ChEBI" id="CHEBI:58894"/>
        <dbReference type="ChEBI" id="CHEBI:70792"/>
        <dbReference type="EC" id="5.4.99.60"/>
    </reaction>
</comment>
<comment type="pathway">
    <text>Cofactor biosynthesis; adenosylcobalamin biosynthesis; cob(II)yrinate a,c-diamide from sirohydrochlorin (anaerobic route): step 9/10.</text>
</comment>
<comment type="subunit">
    <text evidence="1">Homodimer.</text>
</comment>
<comment type="similarity">
    <text evidence="2">Belongs to the CobH/CbiC family.</text>
</comment>
<protein>
    <recommendedName>
        <fullName>Cobalt-precorrin-8 methylmutase</fullName>
        <ecNumber>5.4.99.60</ecNumber>
    </recommendedName>
    <alternativeName>
        <fullName>Cobalt-precorrin isomerase</fullName>
    </alternativeName>
</protein>
<organism>
    <name type="scientific">Methanothermobacter thermautotrophicus (strain ATCC 29096 / DSM 1053 / JCM 10044 / NBRC 100330 / Delta H)</name>
    <name type="common">Methanobacterium thermoautotrophicum</name>
    <dbReference type="NCBI Taxonomy" id="187420"/>
    <lineage>
        <taxon>Archaea</taxon>
        <taxon>Methanobacteriati</taxon>
        <taxon>Methanobacteriota</taxon>
        <taxon>Methanomada group</taxon>
        <taxon>Methanobacteria</taxon>
        <taxon>Methanobacteriales</taxon>
        <taxon>Methanobacteriaceae</taxon>
        <taxon>Methanothermobacter</taxon>
    </lineage>
</organism>
<dbReference type="EC" id="5.4.99.60"/>
<dbReference type="EMBL" id="AE000666">
    <property type="protein sequence ID" value="AAB84733.1"/>
    <property type="molecule type" value="Genomic_DNA"/>
</dbReference>
<dbReference type="PIR" id="B69128">
    <property type="entry name" value="B69128"/>
</dbReference>
<dbReference type="SMR" id="O26329"/>
<dbReference type="FunCoup" id="O26329">
    <property type="interactions" value="90"/>
</dbReference>
<dbReference type="STRING" id="187420.MTH_227"/>
<dbReference type="PaxDb" id="187420-MTH_227"/>
<dbReference type="EnsemblBacteria" id="AAB84733">
    <property type="protein sequence ID" value="AAB84733"/>
    <property type="gene ID" value="MTH_227"/>
</dbReference>
<dbReference type="KEGG" id="mth:MTH_227"/>
<dbReference type="PATRIC" id="fig|187420.15.peg.196"/>
<dbReference type="HOGENOM" id="CLU_084703_1_1_2"/>
<dbReference type="InParanoid" id="O26329"/>
<dbReference type="UniPathway" id="UPA00148">
    <property type="reaction ID" value="UER00230"/>
</dbReference>
<dbReference type="Proteomes" id="UP000005223">
    <property type="component" value="Chromosome"/>
</dbReference>
<dbReference type="GO" id="GO:0043778">
    <property type="term" value="F:cobalt-precorrin-8 methylmutase activity"/>
    <property type="evidence" value="ECO:0007669"/>
    <property type="project" value="UniProtKB-EC"/>
</dbReference>
<dbReference type="GO" id="GO:0016993">
    <property type="term" value="F:precorrin-8X methylmutase activity"/>
    <property type="evidence" value="ECO:0007669"/>
    <property type="project" value="InterPro"/>
</dbReference>
<dbReference type="GO" id="GO:0009236">
    <property type="term" value="P:cobalamin biosynthetic process"/>
    <property type="evidence" value="ECO:0007669"/>
    <property type="project" value="UniProtKB-UniPathway"/>
</dbReference>
<dbReference type="Gene3D" id="3.40.50.10230">
    <property type="entry name" value="Cobalamin biosynthesis CobH/CbiC, precorrin-8X methylmutase"/>
    <property type="match status" value="1"/>
</dbReference>
<dbReference type="InterPro" id="IPR003722">
    <property type="entry name" value="Cbl_synth_CobH/CbiC"/>
</dbReference>
<dbReference type="InterPro" id="IPR036588">
    <property type="entry name" value="CobH/CbiC_sf"/>
</dbReference>
<dbReference type="NCBIfam" id="NF004901">
    <property type="entry name" value="PRK06264.1"/>
    <property type="match status" value="1"/>
</dbReference>
<dbReference type="PANTHER" id="PTHR43588">
    <property type="entry name" value="COBALT-PRECORRIN-8 METHYLMUTASE"/>
    <property type="match status" value="1"/>
</dbReference>
<dbReference type="PANTHER" id="PTHR43588:SF1">
    <property type="entry name" value="COBALT-PRECORRIN-8 METHYLMUTASE"/>
    <property type="match status" value="1"/>
</dbReference>
<dbReference type="Pfam" id="PF02570">
    <property type="entry name" value="CbiC"/>
    <property type="match status" value="1"/>
</dbReference>
<dbReference type="SUPFAM" id="SSF63965">
    <property type="entry name" value="Precorrin-8X methylmutase CbiC/CobH"/>
    <property type="match status" value="1"/>
</dbReference>
<reference key="1">
    <citation type="journal article" date="1997" name="J. Bacteriol.">
        <title>Complete genome sequence of Methanobacterium thermoautotrophicum deltaH: functional analysis and comparative genomics.</title>
        <authorList>
            <person name="Smith D.R."/>
            <person name="Doucette-Stamm L.A."/>
            <person name="Deloughery C."/>
            <person name="Lee H.-M."/>
            <person name="Dubois J."/>
            <person name="Aldredge T."/>
            <person name="Bashirzadeh R."/>
            <person name="Blakely D."/>
            <person name="Cook R."/>
            <person name="Gilbert K."/>
            <person name="Harrison D."/>
            <person name="Hoang L."/>
            <person name="Keagle P."/>
            <person name="Lumm W."/>
            <person name="Pothier B."/>
            <person name="Qiu D."/>
            <person name="Spadafora R."/>
            <person name="Vicare R."/>
            <person name="Wang Y."/>
            <person name="Wierzbowski J."/>
            <person name="Gibson R."/>
            <person name="Jiwani N."/>
            <person name="Caruso A."/>
            <person name="Bush D."/>
            <person name="Safer H."/>
            <person name="Patwell D."/>
            <person name="Prabhakar S."/>
            <person name="McDougall S."/>
            <person name="Shimer G."/>
            <person name="Goyal A."/>
            <person name="Pietrovski S."/>
            <person name="Church G.M."/>
            <person name="Daniels C.J."/>
            <person name="Mao J.-I."/>
            <person name="Rice P."/>
            <person name="Noelling J."/>
            <person name="Reeve J.N."/>
        </authorList>
    </citation>
    <scope>NUCLEOTIDE SEQUENCE [LARGE SCALE GENOMIC DNA]</scope>
    <source>
        <strain>ATCC 29096 / DSM 1053 / JCM 10044 / NBRC 100330 / Delta H</strain>
    </source>
</reference>
<gene>
    <name type="primary">cbiC</name>
    <name type="synonym">cobH</name>
    <name type="ordered locus">MTH_227</name>
</gene>